<keyword id="KW-1015">Disulfide bond</keyword>
<keyword id="KW-0325">Glycoprotein</keyword>
<keyword id="KW-0378">Hydrolase</keyword>
<keyword id="KW-0964">Secreted</keyword>
<keyword id="KW-0719">Serine esterase</keyword>
<keyword id="KW-0732">Signal</keyword>
<dbReference type="EC" id="3.1.1.1"/>
<dbReference type="EMBL" id="AF016110">
    <property type="protein sequence ID" value="AAB70222.1"/>
    <property type="molecule type" value="Genomic_DNA"/>
</dbReference>
<dbReference type="SMR" id="O16171"/>
<dbReference type="ESTHER" id="drope-est5c">
    <property type="family name" value="Carb_B_Arthropoda"/>
</dbReference>
<dbReference type="MEROPS" id="S09.947"/>
<dbReference type="GlyCosmos" id="O16171">
    <property type="glycosylation" value="3 sites, No reported glycans"/>
</dbReference>
<dbReference type="eggNOG" id="KOG1516">
    <property type="taxonomic scope" value="Eukaryota"/>
</dbReference>
<dbReference type="OrthoDB" id="6846267at2759"/>
<dbReference type="GO" id="GO:0005576">
    <property type="term" value="C:extracellular region"/>
    <property type="evidence" value="ECO:0007669"/>
    <property type="project" value="UniProtKB-SubCell"/>
</dbReference>
<dbReference type="GO" id="GO:0106435">
    <property type="term" value="F:carboxylesterase activity"/>
    <property type="evidence" value="ECO:0007669"/>
    <property type="project" value="UniProtKB-EC"/>
</dbReference>
<dbReference type="CDD" id="cd00312">
    <property type="entry name" value="Esterase_lipase"/>
    <property type="match status" value="1"/>
</dbReference>
<dbReference type="FunFam" id="3.40.50.1820:FF:000378">
    <property type="entry name" value="Carboxylic ester hydrolase"/>
    <property type="match status" value="1"/>
</dbReference>
<dbReference type="Gene3D" id="3.40.50.1820">
    <property type="entry name" value="alpha/beta hydrolase"/>
    <property type="match status" value="1"/>
</dbReference>
<dbReference type="InterPro" id="IPR029058">
    <property type="entry name" value="AB_hydrolase_fold"/>
</dbReference>
<dbReference type="InterPro" id="IPR002018">
    <property type="entry name" value="CarbesteraseB"/>
</dbReference>
<dbReference type="InterPro" id="IPR019826">
    <property type="entry name" value="Carboxylesterase_B_AS"/>
</dbReference>
<dbReference type="InterPro" id="IPR019819">
    <property type="entry name" value="Carboxylesterase_B_CS"/>
</dbReference>
<dbReference type="PANTHER" id="PTHR43142">
    <property type="entry name" value="CARBOXYLIC ESTER HYDROLASE"/>
    <property type="match status" value="1"/>
</dbReference>
<dbReference type="PANTHER" id="PTHR43142:SF1">
    <property type="entry name" value="CARBOXYLIC ESTER HYDROLASE"/>
    <property type="match status" value="1"/>
</dbReference>
<dbReference type="Pfam" id="PF00135">
    <property type="entry name" value="COesterase"/>
    <property type="match status" value="1"/>
</dbReference>
<dbReference type="SUPFAM" id="SSF53474">
    <property type="entry name" value="alpha/beta-Hydrolases"/>
    <property type="match status" value="1"/>
</dbReference>
<dbReference type="PROSITE" id="PS00122">
    <property type="entry name" value="CARBOXYLESTERASE_B_1"/>
    <property type="match status" value="1"/>
</dbReference>
<dbReference type="PROSITE" id="PS00941">
    <property type="entry name" value="CARBOXYLESTERASE_B_2"/>
    <property type="match status" value="1"/>
</dbReference>
<name>EST5C_DROPE</name>
<reference key="1">
    <citation type="journal article" date="1998" name="Genetics">
        <title>The role of gene conversion in determining sequence variation and divergence in the Est-5 gene family in Drosophila pseudoobscura.</title>
        <authorList>
            <person name="King L.M."/>
        </authorList>
    </citation>
    <scope>NUCLEOTIDE SEQUENCE [GENOMIC DNA]</scope>
</reference>
<comment type="catalytic activity">
    <reaction evidence="3">
        <text>a carboxylic ester + H2O = an alcohol + a carboxylate + H(+)</text>
        <dbReference type="Rhea" id="RHEA:21164"/>
        <dbReference type="ChEBI" id="CHEBI:15377"/>
        <dbReference type="ChEBI" id="CHEBI:15378"/>
        <dbReference type="ChEBI" id="CHEBI:29067"/>
        <dbReference type="ChEBI" id="CHEBI:30879"/>
        <dbReference type="ChEBI" id="CHEBI:33308"/>
        <dbReference type="EC" id="3.1.1.1"/>
    </reaction>
</comment>
<comment type="subcellular location">
    <subcellularLocation>
        <location>Secreted</location>
    </subcellularLocation>
</comment>
<comment type="similarity">
    <text evidence="4">Belongs to the type-B carboxylesterase/lipase family.</text>
</comment>
<accession>O16171</accession>
<evidence type="ECO:0000250" key="1"/>
<evidence type="ECO:0000255" key="2"/>
<evidence type="ECO:0000255" key="3">
    <source>
        <dbReference type="PROSITE-ProRule" id="PRU10039"/>
    </source>
</evidence>
<evidence type="ECO:0000305" key="4"/>
<organism>
    <name type="scientific">Drosophila persimilis</name>
    <name type="common">Fruit fly</name>
    <dbReference type="NCBI Taxonomy" id="7234"/>
    <lineage>
        <taxon>Eukaryota</taxon>
        <taxon>Metazoa</taxon>
        <taxon>Ecdysozoa</taxon>
        <taxon>Arthropoda</taxon>
        <taxon>Hexapoda</taxon>
        <taxon>Insecta</taxon>
        <taxon>Pterygota</taxon>
        <taxon>Neoptera</taxon>
        <taxon>Endopterygota</taxon>
        <taxon>Diptera</taxon>
        <taxon>Brachycera</taxon>
        <taxon>Muscomorpha</taxon>
        <taxon>Ephydroidea</taxon>
        <taxon>Drosophilidae</taxon>
        <taxon>Drosophila</taxon>
        <taxon>Sophophora</taxon>
    </lineage>
</organism>
<sequence length="545" mass="60921">MLAARLIILLSFYWLSASAIDPADPLFVDLPHGKIRGRDNGFYYSYESLPYAEPPVGELRFEAPQPYKQQWTDTFDATQPPVTCMQWNQFIFGDNKLAGVEDCLTVSIYKPKNTSQSSFPVVAHMHGGAFMFGEARQNGHENMMREGKLILVKISYRLGPLGFASTGDAGLSGNFGLKDQRLALLWIKQNIASFGGEPENIIVVGHSAGGASVHLQMLREDFAQVAKAGISFGGNAMDPWVIHQSARGRTFELGRIVGCGQASDSTELKNCLKSKPAGEIVSAVHSFLVFAYVPFAPFGPVVESPDAPEAFISQHPVDIIKSGKFAQVPWAVTYNTEDGGYNAAVLLEKQASSGRELIFDLNDHWFDWAPYLLFYRDSMTTIKDMDDYSRKLRQEYLGDRRFSVESYWDLQRLFTDILYKNATELALDLYRKHGKSPVYAFVYDNPANTGIGQFFSKRTDVHFGTVHGDEYFLIFENLARGPEMRSDEEIISRNFLNMINDFVVSGNGTMTFGNCVLQDNVGSNKFQLLSITKNGCENLQLESFP</sequence>
<proteinExistence type="inferred from homology"/>
<gene>
    <name type="primary">Est-5C</name>
    <name type="synonym">Est5C</name>
</gene>
<feature type="signal peptide" evidence="2">
    <location>
        <begin position="1"/>
        <end position="19"/>
    </location>
</feature>
<feature type="chain" id="PRO_0000008559" description="Esterase-5C">
    <location>
        <begin position="20"/>
        <end position="545"/>
    </location>
</feature>
<feature type="active site" description="Acyl-ester intermediate" evidence="3">
    <location>
        <position position="207"/>
    </location>
</feature>
<feature type="active site" description="Charge relay system" evidence="1">
    <location>
        <position position="467"/>
    </location>
</feature>
<feature type="glycosylation site" description="N-linked (GlcNAc...) asparagine" evidence="2">
    <location>
        <position position="113"/>
    </location>
</feature>
<feature type="glycosylation site" description="N-linked (GlcNAc...) asparagine" evidence="2">
    <location>
        <position position="421"/>
    </location>
</feature>
<feature type="glycosylation site" description="N-linked (GlcNAc...) asparagine" evidence="2">
    <location>
        <position position="507"/>
    </location>
</feature>
<feature type="disulfide bond" evidence="1">
    <location>
        <begin position="84"/>
        <end position="103"/>
    </location>
</feature>
<feature type="disulfide bond" evidence="1">
    <location>
        <begin position="259"/>
        <end position="271"/>
    </location>
</feature>
<feature type="disulfide bond" evidence="2">
    <location>
        <begin position="515"/>
        <end position="536"/>
    </location>
</feature>
<protein>
    <recommendedName>
        <fullName>Esterase-5C</fullName>
        <shortName>Est-5C</shortName>
        <ecNumber>3.1.1.1</ecNumber>
    </recommendedName>
    <alternativeName>
        <fullName>Carboxylic-ester hydrolase 5C</fullName>
        <shortName>Carboxylesterase-5C</shortName>
    </alternativeName>
</protein>